<proteinExistence type="inferred from homology"/>
<protein>
    <recommendedName>
        <fullName evidence="1">Large ribosomal subunit protein uL16</fullName>
    </recommendedName>
    <alternativeName>
        <fullName evidence="2">50S ribosomal protein L16</fullName>
    </alternativeName>
</protein>
<gene>
    <name evidence="1" type="primary">rplP</name>
    <name type="ordered locus">ECH74115_4636</name>
</gene>
<organism>
    <name type="scientific">Escherichia coli O157:H7 (strain EC4115 / EHEC)</name>
    <dbReference type="NCBI Taxonomy" id="444450"/>
    <lineage>
        <taxon>Bacteria</taxon>
        <taxon>Pseudomonadati</taxon>
        <taxon>Pseudomonadota</taxon>
        <taxon>Gammaproteobacteria</taxon>
        <taxon>Enterobacterales</taxon>
        <taxon>Enterobacteriaceae</taxon>
        <taxon>Escherichia</taxon>
    </lineage>
</organism>
<keyword id="KW-0687">Ribonucleoprotein</keyword>
<keyword id="KW-0689">Ribosomal protein</keyword>
<keyword id="KW-0694">RNA-binding</keyword>
<keyword id="KW-0699">rRNA-binding</keyword>
<keyword id="KW-0820">tRNA-binding</keyword>
<name>RL16_ECO5E</name>
<comment type="function">
    <text evidence="1">Binds 23S rRNA and is also seen to make contacts with the A and possibly P site tRNAs.</text>
</comment>
<comment type="subunit">
    <text evidence="1">Part of the 50S ribosomal subunit.</text>
</comment>
<comment type="similarity">
    <text evidence="1">Belongs to the universal ribosomal protein uL16 family.</text>
</comment>
<reference key="1">
    <citation type="journal article" date="2011" name="Proc. Natl. Acad. Sci. U.S.A.">
        <title>Genomic anatomy of Escherichia coli O157:H7 outbreaks.</title>
        <authorList>
            <person name="Eppinger M."/>
            <person name="Mammel M.K."/>
            <person name="Leclerc J.E."/>
            <person name="Ravel J."/>
            <person name="Cebula T.A."/>
        </authorList>
    </citation>
    <scope>NUCLEOTIDE SEQUENCE [LARGE SCALE GENOMIC DNA]</scope>
    <source>
        <strain>EC4115 / EHEC</strain>
    </source>
</reference>
<evidence type="ECO:0000255" key="1">
    <source>
        <dbReference type="HAMAP-Rule" id="MF_01342"/>
    </source>
</evidence>
<evidence type="ECO:0000305" key="2"/>
<dbReference type="EMBL" id="CP001164">
    <property type="protein sequence ID" value="ACI39834.1"/>
    <property type="molecule type" value="Genomic_DNA"/>
</dbReference>
<dbReference type="RefSeq" id="WP_000941212.1">
    <property type="nucleotide sequence ID" value="NC_011353.1"/>
</dbReference>
<dbReference type="SMR" id="B5YTN4"/>
<dbReference type="GeneID" id="93778674"/>
<dbReference type="KEGG" id="ecf:ECH74115_4636"/>
<dbReference type="HOGENOM" id="CLU_078858_2_1_6"/>
<dbReference type="GO" id="GO:0022625">
    <property type="term" value="C:cytosolic large ribosomal subunit"/>
    <property type="evidence" value="ECO:0007669"/>
    <property type="project" value="TreeGrafter"/>
</dbReference>
<dbReference type="GO" id="GO:0019843">
    <property type="term" value="F:rRNA binding"/>
    <property type="evidence" value="ECO:0007669"/>
    <property type="project" value="UniProtKB-UniRule"/>
</dbReference>
<dbReference type="GO" id="GO:0003735">
    <property type="term" value="F:structural constituent of ribosome"/>
    <property type="evidence" value="ECO:0007669"/>
    <property type="project" value="InterPro"/>
</dbReference>
<dbReference type="GO" id="GO:0000049">
    <property type="term" value="F:tRNA binding"/>
    <property type="evidence" value="ECO:0007669"/>
    <property type="project" value="UniProtKB-KW"/>
</dbReference>
<dbReference type="GO" id="GO:0006412">
    <property type="term" value="P:translation"/>
    <property type="evidence" value="ECO:0007669"/>
    <property type="project" value="UniProtKB-UniRule"/>
</dbReference>
<dbReference type="CDD" id="cd01433">
    <property type="entry name" value="Ribosomal_L16_L10e"/>
    <property type="match status" value="1"/>
</dbReference>
<dbReference type="FunFam" id="3.90.1170.10:FF:000001">
    <property type="entry name" value="50S ribosomal protein L16"/>
    <property type="match status" value="1"/>
</dbReference>
<dbReference type="Gene3D" id="3.90.1170.10">
    <property type="entry name" value="Ribosomal protein L10e/L16"/>
    <property type="match status" value="1"/>
</dbReference>
<dbReference type="HAMAP" id="MF_01342">
    <property type="entry name" value="Ribosomal_uL16"/>
    <property type="match status" value="1"/>
</dbReference>
<dbReference type="InterPro" id="IPR047873">
    <property type="entry name" value="Ribosomal_uL16"/>
</dbReference>
<dbReference type="InterPro" id="IPR000114">
    <property type="entry name" value="Ribosomal_uL16_bact-type"/>
</dbReference>
<dbReference type="InterPro" id="IPR020798">
    <property type="entry name" value="Ribosomal_uL16_CS"/>
</dbReference>
<dbReference type="InterPro" id="IPR016180">
    <property type="entry name" value="Ribosomal_uL16_dom"/>
</dbReference>
<dbReference type="InterPro" id="IPR036920">
    <property type="entry name" value="Ribosomal_uL16_sf"/>
</dbReference>
<dbReference type="NCBIfam" id="TIGR01164">
    <property type="entry name" value="rplP_bact"/>
    <property type="match status" value="1"/>
</dbReference>
<dbReference type="PANTHER" id="PTHR12220">
    <property type="entry name" value="50S/60S RIBOSOMAL PROTEIN L16"/>
    <property type="match status" value="1"/>
</dbReference>
<dbReference type="PANTHER" id="PTHR12220:SF13">
    <property type="entry name" value="LARGE RIBOSOMAL SUBUNIT PROTEIN UL16M"/>
    <property type="match status" value="1"/>
</dbReference>
<dbReference type="Pfam" id="PF00252">
    <property type="entry name" value="Ribosomal_L16"/>
    <property type="match status" value="1"/>
</dbReference>
<dbReference type="PRINTS" id="PR00060">
    <property type="entry name" value="RIBOSOMALL16"/>
</dbReference>
<dbReference type="SUPFAM" id="SSF54686">
    <property type="entry name" value="Ribosomal protein L16p/L10e"/>
    <property type="match status" value="1"/>
</dbReference>
<dbReference type="PROSITE" id="PS00586">
    <property type="entry name" value="RIBOSOMAL_L16_1"/>
    <property type="match status" value="1"/>
</dbReference>
<dbReference type="PROSITE" id="PS00701">
    <property type="entry name" value="RIBOSOMAL_L16_2"/>
    <property type="match status" value="1"/>
</dbReference>
<sequence length="136" mass="15281">MLQPKRTKFRKMHKGRNRGLAQGTDVSFGSFGLKAVGRGRLTARQIEAARRAMTRAVKRQGKIWIRVFPDKPITEKPLAVRMGKGKGNVEYWVALIQPGKVLYEMDGVPEELAREAFKLAAAKLPIKTTFVTKTVM</sequence>
<feature type="chain" id="PRO_1000142964" description="Large ribosomal subunit protein uL16">
    <location>
        <begin position="1"/>
        <end position="136"/>
    </location>
</feature>
<accession>B5YTN4</accession>